<proteinExistence type="inferred from homology"/>
<gene>
    <name evidence="1" type="primary">nadA</name>
    <name type="ordered locus">ECED1_0711</name>
</gene>
<accession>B7MPN4</accession>
<sequence>MSVMFDPDTAIYPFPPKPTPLSIDEKAYYREKIKRLLKERNAVMVAHYYTDPEIQQLAEETGGCISDSLEMARFGAKHPASTLLVAGVRFMGETAKILSPEKTILMPTLQAECSLDLGCPVEEFNAFCDAHPDRTVVVYANTSAAVKARADWVVTSSIAVELIDHLDSLGEKIIWAPDKHLGCYVQKQTGADILCWQGACIVHDEFKTQALTRLQEEYPDAAILVHPESPQAIVEMADAVGSTSQLIAAAKTLPHQRLIVATDRGIFYKMQQAVPDKELLEAPTAGEGATCRSCAHCPWMAMNGLQAIAEALELEGSNHEVYVDERLLERALVPLNRMLDFAATLRG</sequence>
<keyword id="KW-0004">4Fe-4S</keyword>
<keyword id="KW-0963">Cytoplasm</keyword>
<keyword id="KW-0408">Iron</keyword>
<keyword id="KW-0411">Iron-sulfur</keyword>
<keyword id="KW-0479">Metal-binding</keyword>
<keyword id="KW-0662">Pyridine nucleotide biosynthesis</keyword>
<keyword id="KW-0808">Transferase</keyword>
<comment type="function">
    <text evidence="1">Catalyzes the condensation of iminoaspartate with dihydroxyacetone phosphate to form quinolinate.</text>
</comment>
<comment type="catalytic activity">
    <reaction evidence="1">
        <text>iminosuccinate + dihydroxyacetone phosphate = quinolinate + phosphate + 2 H2O + H(+)</text>
        <dbReference type="Rhea" id="RHEA:25888"/>
        <dbReference type="ChEBI" id="CHEBI:15377"/>
        <dbReference type="ChEBI" id="CHEBI:15378"/>
        <dbReference type="ChEBI" id="CHEBI:29959"/>
        <dbReference type="ChEBI" id="CHEBI:43474"/>
        <dbReference type="ChEBI" id="CHEBI:57642"/>
        <dbReference type="ChEBI" id="CHEBI:77875"/>
        <dbReference type="EC" id="2.5.1.72"/>
    </reaction>
    <physiologicalReaction direction="left-to-right" evidence="1">
        <dbReference type="Rhea" id="RHEA:25889"/>
    </physiologicalReaction>
</comment>
<comment type="cofactor">
    <cofactor evidence="1">
        <name>[4Fe-4S] cluster</name>
        <dbReference type="ChEBI" id="CHEBI:49883"/>
    </cofactor>
    <text evidence="1">Binds 1 [4Fe-4S] cluster per subunit.</text>
</comment>
<comment type="pathway">
    <text evidence="1">Cofactor biosynthesis; NAD(+) biosynthesis; quinolinate from iminoaspartate: step 1/1.</text>
</comment>
<comment type="subcellular location">
    <subcellularLocation>
        <location evidence="1">Cytoplasm</location>
    </subcellularLocation>
</comment>
<comment type="similarity">
    <text evidence="1">Belongs to the quinolinate synthase family. Type 1 subfamily.</text>
</comment>
<evidence type="ECO:0000255" key="1">
    <source>
        <dbReference type="HAMAP-Rule" id="MF_00567"/>
    </source>
</evidence>
<protein>
    <recommendedName>
        <fullName evidence="1">Quinolinate synthase</fullName>
        <ecNumber evidence="1">2.5.1.72</ecNumber>
    </recommendedName>
</protein>
<organism>
    <name type="scientific">Escherichia coli O81 (strain ED1a)</name>
    <dbReference type="NCBI Taxonomy" id="585397"/>
    <lineage>
        <taxon>Bacteria</taxon>
        <taxon>Pseudomonadati</taxon>
        <taxon>Pseudomonadota</taxon>
        <taxon>Gammaproteobacteria</taxon>
        <taxon>Enterobacterales</taxon>
        <taxon>Enterobacteriaceae</taxon>
        <taxon>Escherichia</taxon>
    </lineage>
</organism>
<name>NADA_ECO81</name>
<reference key="1">
    <citation type="journal article" date="2009" name="PLoS Genet.">
        <title>Organised genome dynamics in the Escherichia coli species results in highly diverse adaptive paths.</title>
        <authorList>
            <person name="Touchon M."/>
            <person name="Hoede C."/>
            <person name="Tenaillon O."/>
            <person name="Barbe V."/>
            <person name="Baeriswyl S."/>
            <person name="Bidet P."/>
            <person name="Bingen E."/>
            <person name="Bonacorsi S."/>
            <person name="Bouchier C."/>
            <person name="Bouvet O."/>
            <person name="Calteau A."/>
            <person name="Chiapello H."/>
            <person name="Clermont O."/>
            <person name="Cruveiller S."/>
            <person name="Danchin A."/>
            <person name="Diard M."/>
            <person name="Dossat C."/>
            <person name="Karoui M.E."/>
            <person name="Frapy E."/>
            <person name="Garry L."/>
            <person name="Ghigo J.M."/>
            <person name="Gilles A.M."/>
            <person name="Johnson J."/>
            <person name="Le Bouguenec C."/>
            <person name="Lescat M."/>
            <person name="Mangenot S."/>
            <person name="Martinez-Jehanne V."/>
            <person name="Matic I."/>
            <person name="Nassif X."/>
            <person name="Oztas S."/>
            <person name="Petit M.A."/>
            <person name="Pichon C."/>
            <person name="Rouy Z."/>
            <person name="Ruf C.S."/>
            <person name="Schneider D."/>
            <person name="Tourret J."/>
            <person name="Vacherie B."/>
            <person name="Vallenet D."/>
            <person name="Medigue C."/>
            <person name="Rocha E.P.C."/>
            <person name="Denamur E."/>
        </authorList>
    </citation>
    <scope>NUCLEOTIDE SEQUENCE [LARGE SCALE GENOMIC DNA]</scope>
    <source>
        <strain>ED1a</strain>
    </source>
</reference>
<feature type="chain" id="PRO_1000146806" description="Quinolinate synthase">
    <location>
        <begin position="1"/>
        <end position="347"/>
    </location>
</feature>
<feature type="binding site" evidence="1">
    <location>
        <position position="47"/>
    </location>
    <ligand>
        <name>iminosuccinate</name>
        <dbReference type="ChEBI" id="CHEBI:77875"/>
    </ligand>
</feature>
<feature type="binding site" evidence="1">
    <location>
        <position position="68"/>
    </location>
    <ligand>
        <name>iminosuccinate</name>
        <dbReference type="ChEBI" id="CHEBI:77875"/>
    </ligand>
</feature>
<feature type="binding site" evidence="1">
    <location>
        <position position="113"/>
    </location>
    <ligand>
        <name>[4Fe-4S] cluster</name>
        <dbReference type="ChEBI" id="CHEBI:49883"/>
    </ligand>
</feature>
<feature type="binding site" evidence="1">
    <location>
        <begin position="139"/>
        <end position="141"/>
    </location>
    <ligand>
        <name>iminosuccinate</name>
        <dbReference type="ChEBI" id="CHEBI:77875"/>
    </ligand>
</feature>
<feature type="binding site" evidence="1">
    <location>
        <position position="156"/>
    </location>
    <ligand>
        <name>iminosuccinate</name>
        <dbReference type="ChEBI" id="CHEBI:77875"/>
    </ligand>
</feature>
<feature type="binding site" evidence="1">
    <location>
        <position position="200"/>
    </location>
    <ligand>
        <name>[4Fe-4S] cluster</name>
        <dbReference type="ChEBI" id="CHEBI:49883"/>
    </ligand>
</feature>
<feature type="binding site" evidence="1">
    <location>
        <begin position="226"/>
        <end position="228"/>
    </location>
    <ligand>
        <name>iminosuccinate</name>
        <dbReference type="ChEBI" id="CHEBI:77875"/>
    </ligand>
</feature>
<feature type="binding site" evidence="1">
    <location>
        <position position="243"/>
    </location>
    <ligand>
        <name>iminosuccinate</name>
        <dbReference type="ChEBI" id="CHEBI:77875"/>
    </ligand>
</feature>
<feature type="binding site" evidence="1">
    <location>
        <position position="297"/>
    </location>
    <ligand>
        <name>[4Fe-4S] cluster</name>
        <dbReference type="ChEBI" id="CHEBI:49883"/>
    </ligand>
</feature>
<dbReference type="EC" id="2.5.1.72" evidence="1"/>
<dbReference type="EMBL" id="CU928162">
    <property type="protein sequence ID" value="CAR06916.1"/>
    <property type="molecule type" value="Genomic_DNA"/>
</dbReference>
<dbReference type="RefSeq" id="WP_000115276.1">
    <property type="nucleotide sequence ID" value="NC_011745.1"/>
</dbReference>
<dbReference type="SMR" id="B7MPN4"/>
<dbReference type="KEGG" id="ecq:ECED1_0711"/>
<dbReference type="HOGENOM" id="CLU_047382_1_0_6"/>
<dbReference type="UniPathway" id="UPA00253">
    <property type="reaction ID" value="UER00327"/>
</dbReference>
<dbReference type="Proteomes" id="UP000000748">
    <property type="component" value="Chromosome"/>
</dbReference>
<dbReference type="GO" id="GO:0005829">
    <property type="term" value="C:cytosol"/>
    <property type="evidence" value="ECO:0007669"/>
    <property type="project" value="TreeGrafter"/>
</dbReference>
<dbReference type="GO" id="GO:0051539">
    <property type="term" value="F:4 iron, 4 sulfur cluster binding"/>
    <property type="evidence" value="ECO:0007669"/>
    <property type="project" value="UniProtKB-KW"/>
</dbReference>
<dbReference type="GO" id="GO:0046872">
    <property type="term" value="F:metal ion binding"/>
    <property type="evidence" value="ECO:0007669"/>
    <property type="project" value="UniProtKB-KW"/>
</dbReference>
<dbReference type="GO" id="GO:0008987">
    <property type="term" value="F:quinolinate synthetase A activity"/>
    <property type="evidence" value="ECO:0007669"/>
    <property type="project" value="UniProtKB-UniRule"/>
</dbReference>
<dbReference type="GO" id="GO:0034628">
    <property type="term" value="P:'de novo' NAD biosynthetic process from L-aspartate"/>
    <property type="evidence" value="ECO:0007669"/>
    <property type="project" value="TreeGrafter"/>
</dbReference>
<dbReference type="FunFam" id="3.40.50.10800:FF:000001">
    <property type="entry name" value="Quinolinate synthase A"/>
    <property type="match status" value="1"/>
</dbReference>
<dbReference type="FunFam" id="3.40.50.10800:FF:000003">
    <property type="entry name" value="Quinolinate synthase A"/>
    <property type="match status" value="1"/>
</dbReference>
<dbReference type="Gene3D" id="3.40.50.10800">
    <property type="entry name" value="NadA-like"/>
    <property type="match status" value="3"/>
</dbReference>
<dbReference type="HAMAP" id="MF_00567">
    <property type="entry name" value="NadA_type1"/>
    <property type="match status" value="1"/>
</dbReference>
<dbReference type="InterPro" id="IPR003473">
    <property type="entry name" value="NadA"/>
</dbReference>
<dbReference type="InterPro" id="IPR036094">
    <property type="entry name" value="NadA_sf"/>
</dbReference>
<dbReference type="InterPro" id="IPR023513">
    <property type="entry name" value="Quinolinate_synth_A_type1"/>
</dbReference>
<dbReference type="NCBIfam" id="TIGR00550">
    <property type="entry name" value="nadA"/>
    <property type="match status" value="1"/>
</dbReference>
<dbReference type="NCBIfam" id="NF006877">
    <property type="entry name" value="PRK09375.1-1"/>
    <property type="match status" value="1"/>
</dbReference>
<dbReference type="NCBIfam" id="NF006878">
    <property type="entry name" value="PRK09375.1-2"/>
    <property type="match status" value="1"/>
</dbReference>
<dbReference type="PANTHER" id="PTHR30573:SF0">
    <property type="entry name" value="QUINOLINATE SYNTHASE, CHLOROPLASTIC"/>
    <property type="match status" value="1"/>
</dbReference>
<dbReference type="PANTHER" id="PTHR30573">
    <property type="entry name" value="QUINOLINATE SYNTHETASE A"/>
    <property type="match status" value="1"/>
</dbReference>
<dbReference type="Pfam" id="PF02445">
    <property type="entry name" value="NadA"/>
    <property type="match status" value="1"/>
</dbReference>
<dbReference type="SUPFAM" id="SSF142754">
    <property type="entry name" value="NadA-like"/>
    <property type="match status" value="1"/>
</dbReference>